<sequence>MGPRQGRWWLLLWLPPLATLPVRGEAAAAALSVRRCKALKEKDLIRTSESDCYCYNQNSQVEWKYIWSTMQVKITSPGLFRIVYIAERHNCQYPENILSFIKCVIHNFWIPKESNEITIIINPYRETVCFSVEPVKKIFNYMIHVNRNIMDFKLFLVFVAGVFLFFYARTLSQSPTFYYSSGTVLGVLMTLVFVLLLVKRFIPKYSTFWALMVGCWFASVYIVCQLMEDLKWLWYENRIYVLGYVLIVGFFSFVVCYKHGPLADDRSRSLLMWMLRLLSLVLVYAGVAVPQFAYAAIILLMSSWSLHYPLRACSYMRWKMEQWFTSKELVVKYLTEDEYREQADAETNSALEELRRACRKPDFPSWLVVSRLHTPSKFADFVLGGSHLSPEEISLHEEQYGLGGAFLEEQLFNPSTA</sequence>
<organism>
    <name type="scientific">Homo sapiens</name>
    <name type="common">Human</name>
    <dbReference type="NCBI Taxonomy" id="9606"/>
    <lineage>
        <taxon>Eukaryota</taxon>
        <taxon>Metazoa</taxon>
        <taxon>Chordata</taxon>
        <taxon>Craniata</taxon>
        <taxon>Vertebrata</taxon>
        <taxon>Euteleostomi</taxon>
        <taxon>Mammalia</taxon>
        <taxon>Eutheria</taxon>
        <taxon>Euarchontoglires</taxon>
        <taxon>Primates</taxon>
        <taxon>Haplorrhini</taxon>
        <taxon>Catarrhini</taxon>
        <taxon>Hominidae</taxon>
        <taxon>Homo</taxon>
    </lineage>
</organism>
<dbReference type="EMBL" id="AK302425">
    <property type="protein sequence ID" value="BAG63728.1"/>
    <property type="molecule type" value="mRNA"/>
</dbReference>
<dbReference type="EMBL" id="AC093388">
    <property type="status" value="NOT_ANNOTATED_CDS"/>
    <property type="molecule type" value="Genomic_DNA"/>
</dbReference>
<dbReference type="CCDS" id="CCDS46476.1">
    <molecule id="A6NFY4-1"/>
</dbReference>
<dbReference type="RefSeq" id="NP_001136117.1">
    <molecule id="A6NFY4-1"/>
    <property type="nucleotide sequence ID" value="NM_001142645.2"/>
</dbReference>
<dbReference type="BioGRID" id="756056">
    <property type="interactions" value="4"/>
</dbReference>
<dbReference type="FunCoup" id="A6NFY4">
    <property type="interactions" value="954"/>
</dbReference>
<dbReference type="IntAct" id="A6NFY4">
    <property type="interactions" value="2"/>
</dbReference>
<dbReference type="STRING" id="9606.ENSP00000386292"/>
<dbReference type="iPTMnet" id="A6NFY4"/>
<dbReference type="PhosphoSitePlus" id="A6NFY4"/>
<dbReference type="BioMuta" id="NEMP2"/>
<dbReference type="jPOST" id="A6NFY4"/>
<dbReference type="MassIVE" id="A6NFY4"/>
<dbReference type="PaxDb" id="9606-ENSP00000386292"/>
<dbReference type="PeptideAtlas" id="A6NFY4"/>
<dbReference type="ProteomicsDB" id="1089">
    <molecule id="A6NFY4-1"/>
</dbReference>
<dbReference type="Antibodypedia" id="77970">
    <property type="antibodies" value="4 antibodies from 4 providers"/>
</dbReference>
<dbReference type="DNASU" id="100131211"/>
<dbReference type="Ensembl" id="ENST00000409150.8">
    <molecule id="A6NFY4-1"/>
    <property type="protein sequence ID" value="ENSP00000386292.3"/>
    <property type="gene ID" value="ENSG00000189362.12"/>
</dbReference>
<dbReference type="Ensembl" id="ENST00000414176.5">
    <molecule id="A6NFY4-2"/>
    <property type="protein sequence ID" value="ENSP00000404283.1"/>
    <property type="gene ID" value="ENSG00000189362.12"/>
</dbReference>
<dbReference type="GeneID" id="100131211"/>
<dbReference type="KEGG" id="hsa:100131211"/>
<dbReference type="MANE-Select" id="ENST00000409150.8">
    <property type="protein sequence ID" value="ENSP00000386292.3"/>
    <property type="RefSeq nucleotide sequence ID" value="NM_001142645.2"/>
    <property type="RefSeq protein sequence ID" value="NP_001136117.1"/>
</dbReference>
<dbReference type="UCSC" id="uc010zgf.3">
    <molecule id="A6NFY4-1"/>
    <property type="organism name" value="human"/>
</dbReference>
<dbReference type="AGR" id="HGNC:33700"/>
<dbReference type="CTD" id="100131211"/>
<dbReference type="DisGeNET" id="100131211"/>
<dbReference type="GeneCards" id="NEMP2"/>
<dbReference type="HGNC" id="HGNC:33700">
    <property type="gene designation" value="NEMP2"/>
</dbReference>
<dbReference type="HPA" id="ENSG00000189362">
    <property type="expression patterns" value="Low tissue specificity"/>
</dbReference>
<dbReference type="MIM" id="616497">
    <property type="type" value="gene"/>
</dbReference>
<dbReference type="neXtProt" id="NX_A6NFY4"/>
<dbReference type="OpenTargets" id="ENSG00000189362"/>
<dbReference type="PharmGKB" id="PA162406311"/>
<dbReference type="VEuPathDB" id="HostDB:ENSG00000189362"/>
<dbReference type="eggNOG" id="KOG3817">
    <property type="taxonomic scope" value="Eukaryota"/>
</dbReference>
<dbReference type="GeneTree" id="ENSGT00390000002174"/>
<dbReference type="HOGENOM" id="CLU_025225_0_0_1"/>
<dbReference type="InParanoid" id="A6NFY4"/>
<dbReference type="OMA" id="IWSTLQV"/>
<dbReference type="OrthoDB" id="509138at2759"/>
<dbReference type="PAN-GO" id="A6NFY4">
    <property type="GO annotations" value="1 GO annotation based on evolutionary models"/>
</dbReference>
<dbReference type="PhylomeDB" id="A6NFY4"/>
<dbReference type="TreeFam" id="TF314831"/>
<dbReference type="PathwayCommons" id="A6NFY4"/>
<dbReference type="SignaLink" id="A6NFY4"/>
<dbReference type="BioGRID-ORCS" id="100131211">
    <property type="hits" value="13 hits in 1154 CRISPR screens"/>
</dbReference>
<dbReference type="ChiTaRS" id="NEMP2">
    <property type="organism name" value="human"/>
</dbReference>
<dbReference type="GenomeRNAi" id="100131211"/>
<dbReference type="Pharos" id="A6NFY4">
    <property type="development level" value="Tdark"/>
</dbReference>
<dbReference type="PRO" id="PR:A6NFY4"/>
<dbReference type="Proteomes" id="UP000005640">
    <property type="component" value="Chromosome 2"/>
</dbReference>
<dbReference type="RNAct" id="A6NFY4">
    <property type="molecule type" value="protein"/>
</dbReference>
<dbReference type="Bgee" id="ENSG00000189362">
    <property type="expression patterns" value="Expressed in primordial germ cell in gonad and 118 other cell types or tissues"/>
</dbReference>
<dbReference type="ExpressionAtlas" id="A6NFY4">
    <property type="expression patterns" value="baseline and differential"/>
</dbReference>
<dbReference type="GO" id="GO:0005635">
    <property type="term" value="C:nuclear envelope"/>
    <property type="evidence" value="ECO:0000318"/>
    <property type="project" value="GO_Central"/>
</dbReference>
<dbReference type="GO" id="GO:0005637">
    <property type="term" value="C:nuclear inner membrane"/>
    <property type="evidence" value="ECO:0007669"/>
    <property type="project" value="UniProtKB-SubCell"/>
</dbReference>
<dbReference type="InterPro" id="IPR019358">
    <property type="entry name" value="NEMP_fam"/>
</dbReference>
<dbReference type="PANTHER" id="PTHR13598">
    <property type="entry name" value="AT07567P-RELATED"/>
    <property type="match status" value="1"/>
</dbReference>
<dbReference type="PANTHER" id="PTHR13598:SF3">
    <property type="entry name" value="NUCLEAR ENVELOPE INTEGRAL MEMBRANE PROTEIN 2"/>
    <property type="match status" value="1"/>
</dbReference>
<dbReference type="Pfam" id="PF10225">
    <property type="entry name" value="NEMP"/>
    <property type="match status" value="1"/>
</dbReference>
<gene>
    <name type="primary">NEMP2</name>
    <name type="synonym">TMEM194B</name>
</gene>
<proteinExistence type="evidence at protein level"/>
<comment type="subcellular location">
    <subcellularLocation>
        <location evidence="2">Nucleus inner membrane</location>
        <topology evidence="3">Multi-pass membrane protein</topology>
        <orientation evidence="1">Nucleoplasmic side</orientation>
    </subcellularLocation>
</comment>
<comment type="alternative products">
    <event type="alternative splicing"/>
    <isoform>
        <id>A6NFY4-1</id>
        <name>1</name>
        <sequence type="displayed"/>
    </isoform>
    <isoform>
        <id>A6NFY4-2</id>
        <name>2</name>
        <sequence type="described" ref="VSP_056847 VSP_056848 VSP_056849"/>
    </isoform>
</comment>
<comment type="similarity">
    <text evidence="5">Belongs to the NEMP family.</text>
</comment>
<protein>
    <recommendedName>
        <fullName>Nuclear envelope integral membrane protein 2</fullName>
    </recommendedName>
</protein>
<keyword id="KW-0025">Alternative splicing</keyword>
<keyword id="KW-0472">Membrane</keyword>
<keyword id="KW-0539">Nucleus</keyword>
<keyword id="KW-1267">Proteomics identification</keyword>
<keyword id="KW-1185">Reference proteome</keyword>
<keyword id="KW-0732">Signal</keyword>
<keyword id="KW-0812">Transmembrane</keyword>
<keyword id="KW-1133">Transmembrane helix</keyword>
<feature type="signal peptide" evidence="3">
    <location>
        <begin position="1"/>
        <end position="24"/>
    </location>
</feature>
<feature type="chain" id="PRO_0000332238" description="Nuclear envelope integral membrane protein 2">
    <location>
        <begin position="25"/>
        <end position="417"/>
    </location>
</feature>
<feature type="transmembrane region" description="Helical" evidence="3">
    <location>
        <begin position="148"/>
        <end position="168"/>
    </location>
</feature>
<feature type="transmembrane region" description="Helical" evidence="3">
    <location>
        <begin position="177"/>
        <end position="197"/>
    </location>
</feature>
<feature type="transmembrane region" description="Helical" evidence="3">
    <location>
        <begin position="207"/>
        <end position="227"/>
    </location>
</feature>
<feature type="transmembrane region" description="Helical" evidence="3">
    <location>
        <begin position="239"/>
        <end position="259"/>
    </location>
</feature>
<feature type="transmembrane region" description="Helical" evidence="3">
    <location>
        <begin position="280"/>
        <end position="300"/>
    </location>
</feature>
<feature type="splice variant" id="VSP_056847" description="In isoform 2." evidence="4">
    <location>
        <begin position="1"/>
        <end position="69"/>
    </location>
</feature>
<feature type="splice variant" id="VSP_056848" description="In isoform 2." evidence="4">
    <original>YST</original>
    <variation>AMS</variation>
    <location>
        <begin position="205"/>
        <end position="207"/>
    </location>
</feature>
<feature type="splice variant" id="VSP_056849" description="In isoform 2." evidence="4">
    <location>
        <begin position="208"/>
        <end position="417"/>
    </location>
</feature>
<reference key="1">
    <citation type="journal article" date="2004" name="Nat. Genet.">
        <title>Complete sequencing and characterization of 21,243 full-length human cDNAs.</title>
        <authorList>
            <person name="Ota T."/>
            <person name="Suzuki Y."/>
            <person name="Nishikawa T."/>
            <person name="Otsuki T."/>
            <person name="Sugiyama T."/>
            <person name="Irie R."/>
            <person name="Wakamatsu A."/>
            <person name="Hayashi K."/>
            <person name="Sato H."/>
            <person name="Nagai K."/>
            <person name="Kimura K."/>
            <person name="Makita H."/>
            <person name="Sekine M."/>
            <person name="Obayashi M."/>
            <person name="Nishi T."/>
            <person name="Shibahara T."/>
            <person name="Tanaka T."/>
            <person name="Ishii S."/>
            <person name="Yamamoto J."/>
            <person name="Saito K."/>
            <person name="Kawai Y."/>
            <person name="Isono Y."/>
            <person name="Nakamura Y."/>
            <person name="Nagahari K."/>
            <person name="Murakami K."/>
            <person name="Yasuda T."/>
            <person name="Iwayanagi T."/>
            <person name="Wagatsuma M."/>
            <person name="Shiratori A."/>
            <person name="Sudo H."/>
            <person name="Hosoiri T."/>
            <person name="Kaku Y."/>
            <person name="Kodaira H."/>
            <person name="Kondo H."/>
            <person name="Sugawara M."/>
            <person name="Takahashi M."/>
            <person name="Kanda K."/>
            <person name="Yokoi T."/>
            <person name="Furuya T."/>
            <person name="Kikkawa E."/>
            <person name="Omura Y."/>
            <person name="Abe K."/>
            <person name="Kamihara K."/>
            <person name="Katsuta N."/>
            <person name="Sato K."/>
            <person name="Tanikawa M."/>
            <person name="Yamazaki M."/>
            <person name="Ninomiya K."/>
            <person name="Ishibashi T."/>
            <person name="Yamashita H."/>
            <person name="Murakawa K."/>
            <person name="Fujimori K."/>
            <person name="Tanai H."/>
            <person name="Kimata M."/>
            <person name="Watanabe M."/>
            <person name="Hiraoka S."/>
            <person name="Chiba Y."/>
            <person name="Ishida S."/>
            <person name="Ono Y."/>
            <person name="Takiguchi S."/>
            <person name="Watanabe S."/>
            <person name="Yosida M."/>
            <person name="Hotuta T."/>
            <person name="Kusano J."/>
            <person name="Kanehori K."/>
            <person name="Takahashi-Fujii A."/>
            <person name="Hara H."/>
            <person name="Tanase T.-O."/>
            <person name="Nomura Y."/>
            <person name="Togiya S."/>
            <person name="Komai F."/>
            <person name="Hara R."/>
            <person name="Takeuchi K."/>
            <person name="Arita M."/>
            <person name="Imose N."/>
            <person name="Musashino K."/>
            <person name="Yuuki H."/>
            <person name="Oshima A."/>
            <person name="Sasaki N."/>
            <person name="Aotsuka S."/>
            <person name="Yoshikawa Y."/>
            <person name="Matsunawa H."/>
            <person name="Ichihara T."/>
            <person name="Shiohata N."/>
            <person name="Sano S."/>
            <person name="Moriya S."/>
            <person name="Momiyama H."/>
            <person name="Satoh N."/>
            <person name="Takami S."/>
            <person name="Terashima Y."/>
            <person name="Suzuki O."/>
            <person name="Nakagawa S."/>
            <person name="Senoh A."/>
            <person name="Mizoguchi H."/>
            <person name="Goto Y."/>
            <person name="Shimizu F."/>
            <person name="Wakebe H."/>
            <person name="Hishigaki H."/>
            <person name="Watanabe T."/>
            <person name="Sugiyama A."/>
            <person name="Takemoto M."/>
            <person name="Kawakami B."/>
            <person name="Yamazaki M."/>
            <person name="Watanabe K."/>
            <person name="Kumagai A."/>
            <person name="Itakura S."/>
            <person name="Fukuzumi Y."/>
            <person name="Fujimori Y."/>
            <person name="Komiyama M."/>
            <person name="Tashiro H."/>
            <person name="Tanigami A."/>
            <person name="Fujiwara T."/>
            <person name="Ono T."/>
            <person name="Yamada K."/>
            <person name="Fujii Y."/>
            <person name="Ozaki K."/>
            <person name="Hirao M."/>
            <person name="Ohmori Y."/>
            <person name="Kawabata A."/>
            <person name="Hikiji T."/>
            <person name="Kobatake N."/>
            <person name="Inagaki H."/>
            <person name="Ikema Y."/>
            <person name="Okamoto S."/>
            <person name="Okitani R."/>
            <person name="Kawakami T."/>
            <person name="Noguchi S."/>
            <person name="Itoh T."/>
            <person name="Shigeta K."/>
            <person name="Senba T."/>
            <person name="Matsumura K."/>
            <person name="Nakajima Y."/>
            <person name="Mizuno T."/>
            <person name="Morinaga M."/>
            <person name="Sasaki M."/>
            <person name="Togashi T."/>
            <person name="Oyama M."/>
            <person name="Hata H."/>
            <person name="Watanabe M."/>
            <person name="Komatsu T."/>
            <person name="Mizushima-Sugano J."/>
            <person name="Satoh T."/>
            <person name="Shirai Y."/>
            <person name="Takahashi Y."/>
            <person name="Nakagawa K."/>
            <person name="Okumura K."/>
            <person name="Nagase T."/>
            <person name="Nomura N."/>
            <person name="Kikuchi H."/>
            <person name="Masuho Y."/>
            <person name="Yamashita R."/>
            <person name="Nakai K."/>
            <person name="Yada T."/>
            <person name="Nakamura Y."/>
            <person name="Ohara O."/>
            <person name="Isogai T."/>
            <person name="Sugano S."/>
        </authorList>
    </citation>
    <scope>NUCLEOTIDE SEQUENCE [LARGE SCALE MRNA] (ISOFORM 2)</scope>
    <source>
        <tissue>Testis</tissue>
    </source>
</reference>
<reference key="2">
    <citation type="journal article" date="2005" name="Nature">
        <title>Generation and annotation of the DNA sequences of human chromosomes 2 and 4.</title>
        <authorList>
            <person name="Hillier L.W."/>
            <person name="Graves T.A."/>
            <person name="Fulton R.S."/>
            <person name="Fulton L.A."/>
            <person name="Pepin K.H."/>
            <person name="Minx P."/>
            <person name="Wagner-McPherson C."/>
            <person name="Layman D."/>
            <person name="Wylie K."/>
            <person name="Sekhon M."/>
            <person name="Becker M.C."/>
            <person name="Fewell G.A."/>
            <person name="Delehaunty K.D."/>
            <person name="Miner T.L."/>
            <person name="Nash W.E."/>
            <person name="Kremitzki C."/>
            <person name="Oddy L."/>
            <person name="Du H."/>
            <person name="Sun H."/>
            <person name="Bradshaw-Cordum H."/>
            <person name="Ali J."/>
            <person name="Carter J."/>
            <person name="Cordes M."/>
            <person name="Harris A."/>
            <person name="Isak A."/>
            <person name="van Brunt A."/>
            <person name="Nguyen C."/>
            <person name="Du F."/>
            <person name="Courtney L."/>
            <person name="Kalicki J."/>
            <person name="Ozersky P."/>
            <person name="Abbott S."/>
            <person name="Armstrong J."/>
            <person name="Belter E.A."/>
            <person name="Caruso L."/>
            <person name="Cedroni M."/>
            <person name="Cotton M."/>
            <person name="Davidson T."/>
            <person name="Desai A."/>
            <person name="Elliott G."/>
            <person name="Erb T."/>
            <person name="Fronick C."/>
            <person name="Gaige T."/>
            <person name="Haakenson W."/>
            <person name="Haglund K."/>
            <person name="Holmes A."/>
            <person name="Harkins R."/>
            <person name="Kim K."/>
            <person name="Kruchowski S.S."/>
            <person name="Strong C.M."/>
            <person name="Grewal N."/>
            <person name="Goyea E."/>
            <person name="Hou S."/>
            <person name="Levy A."/>
            <person name="Martinka S."/>
            <person name="Mead K."/>
            <person name="McLellan M.D."/>
            <person name="Meyer R."/>
            <person name="Randall-Maher J."/>
            <person name="Tomlinson C."/>
            <person name="Dauphin-Kohlberg S."/>
            <person name="Kozlowicz-Reilly A."/>
            <person name="Shah N."/>
            <person name="Swearengen-Shahid S."/>
            <person name="Snider J."/>
            <person name="Strong J.T."/>
            <person name="Thompson J."/>
            <person name="Yoakum M."/>
            <person name="Leonard S."/>
            <person name="Pearman C."/>
            <person name="Trani L."/>
            <person name="Radionenko M."/>
            <person name="Waligorski J.E."/>
            <person name="Wang C."/>
            <person name="Rock S.M."/>
            <person name="Tin-Wollam A.-M."/>
            <person name="Maupin R."/>
            <person name="Latreille P."/>
            <person name="Wendl M.C."/>
            <person name="Yang S.-P."/>
            <person name="Pohl C."/>
            <person name="Wallis J.W."/>
            <person name="Spieth J."/>
            <person name="Bieri T.A."/>
            <person name="Berkowicz N."/>
            <person name="Nelson J.O."/>
            <person name="Osborne J."/>
            <person name="Ding L."/>
            <person name="Meyer R."/>
            <person name="Sabo A."/>
            <person name="Shotland Y."/>
            <person name="Sinha P."/>
            <person name="Wohldmann P.E."/>
            <person name="Cook L.L."/>
            <person name="Hickenbotham M.T."/>
            <person name="Eldred J."/>
            <person name="Williams D."/>
            <person name="Jones T.A."/>
            <person name="She X."/>
            <person name="Ciccarelli F.D."/>
            <person name="Izaurralde E."/>
            <person name="Taylor J."/>
            <person name="Schmutz J."/>
            <person name="Myers R.M."/>
            <person name="Cox D.R."/>
            <person name="Huang X."/>
            <person name="McPherson J.D."/>
            <person name="Mardis E.R."/>
            <person name="Clifton S.W."/>
            <person name="Warren W.C."/>
            <person name="Chinwalla A.T."/>
            <person name="Eddy S.R."/>
            <person name="Marra M.A."/>
            <person name="Ovcharenko I."/>
            <person name="Furey T.S."/>
            <person name="Miller W."/>
            <person name="Eichler E.E."/>
            <person name="Bork P."/>
            <person name="Suyama M."/>
            <person name="Torrents D."/>
            <person name="Waterston R.H."/>
            <person name="Wilson R.K."/>
        </authorList>
    </citation>
    <scope>NUCLEOTIDE SEQUENCE [LARGE SCALE GENOMIC DNA]</scope>
</reference>
<accession>A6NFY4</accession>
<accession>B4DYG6</accession>
<name>NEMP2_HUMAN</name>
<evidence type="ECO:0000250" key="1">
    <source>
        <dbReference type="UniProtKB" id="B9X187"/>
    </source>
</evidence>
<evidence type="ECO:0000250" key="2">
    <source>
        <dbReference type="UniProtKB" id="Q6ZQE4"/>
    </source>
</evidence>
<evidence type="ECO:0000255" key="3"/>
<evidence type="ECO:0000303" key="4">
    <source>
    </source>
</evidence>
<evidence type="ECO:0000305" key="5"/>